<dbReference type="EMBL" id="CP000435">
    <property type="protein sequence ID" value="ABI46381.1"/>
    <property type="molecule type" value="Genomic_DNA"/>
</dbReference>
<dbReference type="SMR" id="Q0I7K5"/>
<dbReference type="STRING" id="64471.sync_2370"/>
<dbReference type="KEGG" id="syg:sync_2370"/>
<dbReference type="eggNOG" id="COG0779">
    <property type="taxonomic scope" value="Bacteria"/>
</dbReference>
<dbReference type="HOGENOM" id="CLU_070525_2_1_3"/>
<dbReference type="Proteomes" id="UP000001961">
    <property type="component" value="Chromosome"/>
</dbReference>
<dbReference type="GO" id="GO:0005829">
    <property type="term" value="C:cytosol"/>
    <property type="evidence" value="ECO:0007669"/>
    <property type="project" value="TreeGrafter"/>
</dbReference>
<dbReference type="GO" id="GO:0000028">
    <property type="term" value="P:ribosomal small subunit assembly"/>
    <property type="evidence" value="ECO:0007669"/>
    <property type="project" value="TreeGrafter"/>
</dbReference>
<dbReference type="GO" id="GO:0006412">
    <property type="term" value="P:translation"/>
    <property type="evidence" value="ECO:0007669"/>
    <property type="project" value="TreeGrafter"/>
</dbReference>
<dbReference type="Gene3D" id="3.30.300.70">
    <property type="entry name" value="RimP-like superfamily, N-terminal"/>
    <property type="match status" value="1"/>
</dbReference>
<dbReference type="HAMAP" id="MF_01077">
    <property type="entry name" value="RimP"/>
    <property type="match status" value="1"/>
</dbReference>
<dbReference type="InterPro" id="IPR003728">
    <property type="entry name" value="Ribosome_maturation_RimP"/>
</dbReference>
<dbReference type="InterPro" id="IPR028989">
    <property type="entry name" value="RimP_N"/>
</dbReference>
<dbReference type="InterPro" id="IPR035956">
    <property type="entry name" value="RimP_N_sf"/>
</dbReference>
<dbReference type="NCBIfam" id="NF011227">
    <property type="entry name" value="PRK14634.1"/>
    <property type="match status" value="1"/>
</dbReference>
<dbReference type="PANTHER" id="PTHR33867">
    <property type="entry name" value="RIBOSOME MATURATION FACTOR RIMP"/>
    <property type="match status" value="1"/>
</dbReference>
<dbReference type="PANTHER" id="PTHR33867:SF1">
    <property type="entry name" value="RIBOSOME MATURATION FACTOR RIMP"/>
    <property type="match status" value="1"/>
</dbReference>
<dbReference type="Pfam" id="PF02576">
    <property type="entry name" value="RimP_N"/>
    <property type="match status" value="1"/>
</dbReference>
<dbReference type="SUPFAM" id="SSF75420">
    <property type="entry name" value="YhbC-like, N-terminal domain"/>
    <property type="match status" value="1"/>
</dbReference>
<gene>
    <name evidence="1" type="primary">rimP</name>
    <name type="ordered locus">sync_2370</name>
</gene>
<name>RIMP_SYNS3</name>
<organism>
    <name type="scientific">Synechococcus sp. (strain CC9311)</name>
    <dbReference type="NCBI Taxonomy" id="64471"/>
    <lineage>
        <taxon>Bacteria</taxon>
        <taxon>Bacillati</taxon>
        <taxon>Cyanobacteriota</taxon>
        <taxon>Cyanophyceae</taxon>
        <taxon>Synechococcales</taxon>
        <taxon>Synechococcaceae</taxon>
        <taxon>Synechococcus</taxon>
    </lineage>
</organism>
<protein>
    <recommendedName>
        <fullName evidence="1">Ribosome maturation factor RimP</fullName>
    </recommendedName>
</protein>
<reference key="1">
    <citation type="journal article" date="2006" name="Proc. Natl. Acad. Sci. U.S.A.">
        <title>Genome sequence of Synechococcus CC9311: insights into adaptation to a coastal environment.</title>
        <authorList>
            <person name="Palenik B."/>
            <person name="Ren Q."/>
            <person name="Dupont C.L."/>
            <person name="Myers G.S."/>
            <person name="Heidelberg J.F."/>
            <person name="Badger J.H."/>
            <person name="Madupu R."/>
            <person name="Nelson W.C."/>
            <person name="Brinkac L.M."/>
            <person name="Dodson R.J."/>
            <person name="Durkin A.S."/>
            <person name="Daugherty S.C."/>
            <person name="Sullivan S.A."/>
            <person name="Khouri H."/>
            <person name="Mohamoud Y."/>
            <person name="Halpin R."/>
            <person name="Paulsen I.T."/>
        </authorList>
    </citation>
    <scope>NUCLEOTIDE SEQUENCE [LARGE SCALE GENOMIC DNA]</scope>
    <source>
        <strain>CC9311</strain>
    </source>
</reference>
<feature type="chain" id="PRO_0000384792" description="Ribosome maturation factor RimP">
    <location>
        <begin position="1"/>
        <end position="157"/>
    </location>
</feature>
<sequence length="157" mass="17346">MFLPHPLLPDLKDLASATAVDHGFELADLQVLAHMQPMTVQIQIRRSSGDDVTLDDCAAFSAPMGEALENSAVLNEAYVLEISSPGIGDHLQSDRDFQTFRRYPVDVIHRDPDGAEQKHSGTLLERTENHLKISIHGRIKQIPRDSILSVELTNPTG</sequence>
<keyword id="KW-0963">Cytoplasm</keyword>
<keyword id="KW-1185">Reference proteome</keyword>
<keyword id="KW-0690">Ribosome biogenesis</keyword>
<evidence type="ECO:0000255" key="1">
    <source>
        <dbReference type="HAMAP-Rule" id="MF_01077"/>
    </source>
</evidence>
<accession>Q0I7K5</accession>
<comment type="function">
    <text evidence="1">Required for maturation of 30S ribosomal subunits.</text>
</comment>
<comment type="subcellular location">
    <subcellularLocation>
        <location evidence="1">Cytoplasm</location>
    </subcellularLocation>
</comment>
<comment type="similarity">
    <text evidence="1">Belongs to the RimP family.</text>
</comment>
<proteinExistence type="inferred from homology"/>